<proteinExistence type="inferred from homology"/>
<dbReference type="EC" id="1.17.1.8" evidence="1"/>
<dbReference type="EMBL" id="CP000969">
    <property type="protein sequence ID" value="ACB09758.1"/>
    <property type="molecule type" value="Genomic_DNA"/>
</dbReference>
<dbReference type="RefSeq" id="WP_012311108.1">
    <property type="nucleotide sequence ID" value="NC_010483.1"/>
</dbReference>
<dbReference type="SMR" id="B1LBR0"/>
<dbReference type="KEGG" id="trq:TRQ2_1414"/>
<dbReference type="HOGENOM" id="CLU_047479_1_1_0"/>
<dbReference type="UniPathway" id="UPA00034">
    <property type="reaction ID" value="UER00018"/>
</dbReference>
<dbReference type="Proteomes" id="UP000001687">
    <property type="component" value="Chromosome"/>
</dbReference>
<dbReference type="GO" id="GO:0005829">
    <property type="term" value="C:cytosol"/>
    <property type="evidence" value="ECO:0007669"/>
    <property type="project" value="TreeGrafter"/>
</dbReference>
<dbReference type="GO" id="GO:0008839">
    <property type="term" value="F:4-hydroxy-tetrahydrodipicolinate reductase"/>
    <property type="evidence" value="ECO:0007669"/>
    <property type="project" value="UniProtKB-EC"/>
</dbReference>
<dbReference type="GO" id="GO:0051287">
    <property type="term" value="F:NAD binding"/>
    <property type="evidence" value="ECO:0007669"/>
    <property type="project" value="UniProtKB-UniRule"/>
</dbReference>
<dbReference type="GO" id="GO:0050661">
    <property type="term" value="F:NADP binding"/>
    <property type="evidence" value="ECO:0007669"/>
    <property type="project" value="UniProtKB-UniRule"/>
</dbReference>
<dbReference type="GO" id="GO:0016726">
    <property type="term" value="F:oxidoreductase activity, acting on CH or CH2 groups, NAD or NADP as acceptor"/>
    <property type="evidence" value="ECO:0007669"/>
    <property type="project" value="UniProtKB-UniRule"/>
</dbReference>
<dbReference type="GO" id="GO:0019877">
    <property type="term" value="P:diaminopimelate biosynthetic process"/>
    <property type="evidence" value="ECO:0007669"/>
    <property type="project" value="UniProtKB-UniRule"/>
</dbReference>
<dbReference type="GO" id="GO:0009089">
    <property type="term" value="P:lysine biosynthetic process via diaminopimelate"/>
    <property type="evidence" value="ECO:0007669"/>
    <property type="project" value="UniProtKB-UniRule"/>
</dbReference>
<dbReference type="CDD" id="cd02274">
    <property type="entry name" value="DHDPR_N"/>
    <property type="match status" value="1"/>
</dbReference>
<dbReference type="Gene3D" id="3.30.360.10">
    <property type="entry name" value="Dihydrodipicolinate Reductase, domain 2"/>
    <property type="match status" value="1"/>
</dbReference>
<dbReference type="Gene3D" id="3.40.50.720">
    <property type="entry name" value="NAD(P)-binding Rossmann-like Domain"/>
    <property type="match status" value="1"/>
</dbReference>
<dbReference type="HAMAP" id="MF_00102">
    <property type="entry name" value="DapB"/>
    <property type="match status" value="1"/>
</dbReference>
<dbReference type="InterPro" id="IPR022663">
    <property type="entry name" value="DapB_C"/>
</dbReference>
<dbReference type="InterPro" id="IPR000846">
    <property type="entry name" value="DapB_N"/>
</dbReference>
<dbReference type="InterPro" id="IPR022664">
    <property type="entry name" value="DapB_N_CS"/>
</dbReference>
<dbReference type="InterPro" id="IPR023940">
    <property type="entry name" value="DHDPR_bac"/>
</dbReference>
<dbReference type="InterPro" id="IPR036291">
    <property type="entry name" value="NAD(P)-bd_dom_sf"/>
</dbReference>
<dbReference type="PANTHER" id="PTHR20836:SF0">
    <property type="entry name" value="4-HYDROXY-TETRAHYDRODIPICOLINATE REDUCTASE 1, CHLOROPLASTIC-RELATED"/>
    <property type="match status" value="1"/>
</dbReference>
<dbReference type="PANTHER" id="PTHR20836">
    <property type="entry name" value="DIHYDRODIPICOLINATE REDUCTASE"/>
    <property type="match status" value="1"/>
</dbReference>
<dbReference type="Pfam" id="PF05173">
    <property type="entry name" value="DapB_C"/>
    <property type="match status" value="1"/>
</dbReference>
<dbReference type="Pfam" id="PF01113">
    <property type="entry name" value="DapB_N"/>
    <property type="match status" value="1"/>
</dbReference>
<dbReference type="PIRSF" id="PIRSF000161">
    <property type="entry name" value="DHPR"/>
    <property type="match status" value="1"/>
</dbReference>
<dbReference type="SUPFAM" id="SSF55347">
    <property type="entry name" value="Glyceraldehyde-3-phosphate dehydrogenase-like, C-terminal domain"/>
    <property type="match status" value="1"/>
</dbReference>
<dbReference type="SUPFAM" id="SSF51735">
    <property type="entry name" value="NAD(P)-binding Rossmann-fold domains"/>
    <property type="match status" value="1"/>
</dbReference>
<dbReference type="PROSITE" id="PS01298">
    <property type="entry name" value="DAPB"/>
    <property type="match status" value="1"/>
</dbReference>
<sequence>MKYGIVGYSGRMGQEIQKVFSEKGHELVLKVDVNGVEELGSPDVVVDFSSPEALPKTVELCKKYRAGLVLGTTALKEEHLQMLRELSKEVPVVQAYNFSIGINVLKRFLSELVKVLEDWDVEIVETHHRFKKDAPSGTAILLESALGKSVPIHSLRVGGVPGDHVVVFGNIGETIEIKHRAISRTVFAIGALKAAEFLVGKDPGMYSFEEVIFGGE</sequence>
<reference key="1">
    <citation type="journal article" date="2011" name="J. Bacteriol.">
        <title>Genome sequence of Thermotoga sp. strain RQ2, a hyperthermophilic bacterium isolated from a geothermally heated region of the seafloor near Ribeira Quente, the Azores.</title>
        <authorList>
            <person name="Swithers K.S."/>
            <person name="DiPippo J.L."/>
            <person name="Bruce D.C."/>
            <person name="Detter C."/>
            <person name="Tapia R."/>
            <person name="Han S."/>
            <person name="Saunders E."/>
            <person name="Goodwin L.A."/>
            <person name="Han J."/>
            <person name="Woyke T."/>
            <person name="Pitluck S."/>
            <person name="Pennacchio L."/>
            <person name="Nolan M."/>
            <person name="Mikhailova N."/>
            <person name="Lykidis A."/>
            <person name="Land M.L."/>
            <person name="Brettin T."/>
            <person name="Stetter K.O."/>
            <person name="Nelson K.E."/>
            <person name="Gogarten J.P."/>
            <person name="Noll K.M."/>
        </authorList>
    </citation>
    <scope>NUCLEOTIDE SEQUENCE [LARGE SCALE GENOMIC DNA]</scope>
    <source>
        <strain>RQ2</strain>
    </source>
</reference>
<organism>
    <name type="scientific">Thermotoga sp. (strain RQ2)</name>
    <dbReference type="NCBI Taxonomy" id="126740"/>
    <lineage>
        <taxon>Bacteria</taxon>
        <taxon>Thermotogati</taxon>
        <taxon>Thermotogota</taxon>
        <taxon>Thermotogae</taxon>
        <taxon>Thermotogales</taxon>
        <taxon>Thermotogaceae</taxon>
        <taxon>Thermotoga</taxon>
    </lineage>
</organism>
<protein>
    <recommendedName>
        <fullName evidence="1">4-hydroxy-tetrahydrodipicolinate reductase</fullName>
        <shortName evidence="1">HTPA reductase</shortName>
        <ecNumber evidence="1">1.17.1.8</ecNumber>
    </recommendedName>
</protein>
<keyword id="KW-0028">Amino-acid biosynthesis</keyword>
<keyword id="KW-0963">Cytoplasm</keyword>
<keyword id="KW-0220">Diaminopimelate biosynthesis</keyword>
<keyword id="KW-0457">Lysine biosynthesis</keyword>
<keyword id="KW-0520">NAD</keyword>
<keyword id="KW-0521">NADP</keyword>
<keyword id="KW-0560">Oxidoreductase</keyword>
<feature type="chain" id="PRO_1000094016" description="4-hydroxy-tetrahydrodipicolinate reductase">
    <location>
        <begin position="1"/>
        <end position="216"/>
    </location>
</feature>
<feature type="active site" description="Proton donor/acceptor" evidence="1">
    <location>
        <position position="127"/>
    </location>
</feature>
<feature type="active site" description="Proton donor" evidence="1">
    <location>
        <position position="131"/>
    </location>
</feature>
<feature type="binding site" evidence="1">
    <location>
        <begin position="7"/>
        <end position="12"/>
    </location>
    <ligand>
        <name>NAD(+)</name>
        <dbReference type="ChEBI" id="CHEBI:57540"/>
    </ligand>
</feature>
<feature type="binding site" evidence="1">
    <location>
        <begin position="71"/>
        <end position="73"/>
    </location>
    <ligand>
        <name>NAD(+)</name>
        <dbReference type="ChEBI" id="CHEBI:57540"/>
    </ligand>
</feature>
<feature type="binding site" evidence="1">
    <location>
        <begin position="95"/>
        <end position="98"/>
    </location>
    <ligand>
        <name>NAD(+)</name>
        <dbReference type="ChEBI" id="CHEBI:57540"/>
    </ligand>
</feature>
<feature type="binding site" evidence="1">
    <location>
        <position position="128"/>
    </location>
    <ligand>
        <name>(S)-2,3,4,5-tetrahydrodipicolinate</name>
        <dbReference type="ChEBI" id="CHEBI:16845"/>
    </ligand>
</feature>
<feature type="binding site" evidence="1">
    <location>
        <begin position="137"/>
        <end position="138"/>
    </location>
    <ligand>
        <name>(S)-2,3,4,5-tetrahydrodipicolinate</name>
        <dbReference type="ChEBI" id="CHEBI:16845"/>
    </ligand>
</feature>
<evidence type="ECO:0000255" key="1">
    <source>
        <dbReference type="HAMAP-Rule" id="MF_00102"/>
    </source>
</evidence>
<evidence type="ECO:0000305" key="2"/>
<gene>
    <name evidence="1" type="primary">dapB</name>
    <name type="ordered locus">TRQ2_1414</name>
</gene>
<accession>B1LBR0</accession>
<comment type="function">
    <text evidence="1">Catalyzes the conversion of 4-hydroxy-tetrahydrodipicolinate (HTPA) to tetrahydrodipicolinate.</text>
</comment>
<comment type="catalytic activity">
    <reaction evidence="1">
        <text>(S)-2,3,4,5-tetrahydrodipicolinate + NAD(+) + H2O = (2S,4S)-4-hydroxy-2,3,4,5-tetrahydrodipicolinate + NADH + H(+)</text>
        <dbReference type="Rhea" id="RHEA:35323"/>
        <dbReference type="ChEBI" id="CHEBI:15377"/>
        <dbReference type="ChEBI" id="CHEBI:15378"/>
        <dbReference type="ChEBI" id="CHEBI:16845"/>
        <dbReference type="ChEBI" id="CHEBI:57540"/>
        <dbReference type="ChEBI" id="CHEBI:57945"/>
        <dbReference type="ChEBI" id="CHEBI:67139"/>
        <dbReference type="EC" id="1.17.1.8"/>
    </reaction>
</comment>
<comment type="catalytic activity">
    <reaction evidence="1">
        <text>(S)-2,3,4,5-tetrahydrodipicolinate + NADP(+) + H2O = (2S,4S)-4-hydroxy-2,3,4,5-tetrahydrodipicolinate + NADPH + H(+)</text>
        <dbReference type="Rhea" id="RHEA:35331"/>
        <dbReference type="ChEBI" id="CHEBI:15377"/>
        <dbReference type="ChEBI" id="CHEBI:15378"/>
        <dbReference type="ChEBI" id="CHEBI:16845"/>
        <dbReference type="ChEBI" id="CHEBI:57783"/>
        <dbReference type="ChEBI" id="CHEBI:58349"/>
        <dbReference type="ChEBI" id="CHEBI:67139"/>
        <dbReference type="EC" id="1.17.1.8"/>
    </reaction>
</comment>
<comment type="pathway">
    <text evidence="1">Amino-acid biosynthesis; L-lysine biosynthesis via DAP pathway; (S)-tetrahydrodipicolinate from L-aspartate: step 4/4.</text>
</comment>
<comment type="subcellular location">
    <subcellularLocation>
        <location evidence="1">Cytoplasm</location>
    </subcellularLocation>
</comment>
<comment type="similarity">
    <text evidence="1">Belongs to the DapB family.</text>
</comment>
<comment type="caution">
    <text evidence="2">Was originally thought to be a dihydrodipicolinate reductase (DHDPR), catalyzing the conversion of dihydrodipicolinate to tetrahydrodipicolinate. However, it was shown in E.coli that the substrate of the enzymatic reaction is not dihydrodipicolinate (DHDP) but in fact (2S,4S)-4-hydroxy-2,3,4,5-tetrahydrodipicolinic acid (HTPA), the product released by the DapA-catalyzed reaction.</text>
</comment>
<name>DAPB_THESQ</name>